<reference key="1">
    <citation type="journal article" date="1987" name="J. Biol. Chem.">
        <title>Cloning and characterization of a 12-gene cluster from Bacillus subtilis encoding nine enzymes for de novo purine nucleotide synthesis.</title>
        <authorList>
            <person name="Ebbole D.J."/>
            <person name="Zalkin H."/>
        </authorList>
    </citation>
    <scope>NUCLEOTIDE SEQUENCE [GENOMIC DNA]</scope>
</reference>
<reference key="2">
    <citation type="journal article" date="1997" name="Nature">
        <title>The complete genome sequence of the Gram-positive bacterium Bacillus subtilis.</title>
        <authorList>
            <person name="Kunst F."/>
            <person name="Ogasawara N."/>
            <person name="Moszer I."/>
            <person name="Albertini A.M."/>
            <person name="Alloni G."/>
            <person name="Azevedo V."/>
            <person name="Bertero M.G."/>
            <person name="Bessieres P."/>
            <person name="Bolotin A."/>
            <person name="Borchert S."/>
            <person name="Borriss R."/>
            <person name="Boursier L."/>
            <person name="Brans A."/>
            <person name="Braun M."/>
            <person name="Brignell S.C."/>
            <person name="Bron S."/>
            <person name="Brouillet S."/>
            <person name="Bruschi C.V."/>
            <person name="Caldwell B."/>
            <person name="Capuano V."/>
            <person name="Carter N.M."/>
            <person name="Choi S.-K."/>
            <person name="Codani J.-J."/>
            <person name="Connerton I.F."/>
            <person name="Cummings N.J."/>
            <person name="Daniel R.A."/>
            <person name="Denizot F."/>
            <person name="Devine K.M."/>
            <person name="Duesterhoeft A."/>
            <person name="Ehrlich S.D."/>
            <person name="Emmerson P.T."/>
            <person name="Entian K.-D."/>
            <person name="Errington J."/>
            <person name="Fabret C."/>
            <person name="Ferrari E."/>
            <person name="Foulger D."/>
            <person name="Fritz C."/>
            <person name="Fujita M."/>
            <person name="Fujita Y."/>
            <person name="Fuma S."/>
            <person name="Galizzi A."/>
            <person name="Galleron N."/>
            <person name="Ghim S.-Y."/>
            <person name="Glaser P."/>
            <person name="Goffeau A."/>
            <person name="Golightly E.J."/>
            <person name="Grandi G."/>
            <person name="Guiseppi G."/>
            <person name="Guy B.J."/>
            <person name="Haga K."/>
            <person name="Haiech J."/>
            <person name="Harwood C.R."/>
            <person name="Henaut A."/>
            <person name="Hilbert H."/>
            <person name="Holsappel S."/>
            <person name="Hosono S."/>
            <person name="Hullo M.-F."/>
            <person name="Itaya M."/>
            <person name="Jones L.-M."/>
            <person name="Joris B."/>
            <person name="Karamata D."/>
            <person name="Kasahara Y."/>
            <person name="Klaerr-Blanchard M."/>
            <person name="Klein C."/>
            <person name="Kobayashi Y."/>
            <person name="Koetter P."/>
            <person name="Koningstein G."/>
            <person name="Krogh S."/>
            <person name="Kumano M."/>
            <person name="Kurita K."/>
            <person name="Lapidus A."/>
            <person name="Lardinois S."/>
            <person name="Lauber J."/>
            <person name="Lazarevic V."/>
            <person name="Lee S.-M."/>
            <person name="Levine A."/>
            <person name="Liu H."/>
            <person name="Masuda S."/>
            <person name="Mauel C."/>
            <person name="Medigue C."/>
            <person name="Medina N."/>
            <person name="Mellado R.P."/>
            <person name="Mizuno M."/>
            <person name="Moestl D."/>
            <person name="Nakai S."/>
            <person name="Noback M."/>
            <person name="Noone D."/>
            <person name="O'Reilly M."/>
            <person name="Ogawa K."/>
            <person name="Ogiwara A."/>
            <person name="Oudega B."/>
            <person name="Park S.-H."/>
            <person name="Parro V."/>
            <person name="Pohl T.M."/>
            <person name="Portetelle D."/>
            <person name="Porwollik S."/>
            <person name="Prescott A.M."/>
            <person name="Presecan E."/>
            <person name="Pujic P."/>
            <person name="Purnelle B."/>
            <person name="Rapoport G."/>
            <person name="Rey M."/>
            <person name="Reynolds S."/>
            <person name="Rieger M."/>
            <person name="Rivolta C."/>
            <person name="Rocha E."/>
            <person name="Roche B."/>
            <person name="Rose M."/>
            <person name="Sadaie Y."/>
            <person name="Sato T."/>
            <person name="Scanlan E."/>
            <person name="Schleich S."/>
            <person name="Schroeter R."/>
            <person name="Scoffone F."/>
            <person name="Sekiguchi J."/>
            <person name="Sekowska A."/>
            <person name="Seror S.J."/>
            <person name="Serror P."/>
            <person name="Shin B.-S."/>
            <person name="Soldo B."/>
            <person name="Sorokin A."/>
            <person name="Tacconi E."/>
            <person name="Takagi T."/>
            <person name="Takahashi H."/>
            <person name="Takemaru K."/>
            <person name="Takeuchi M."/>
            <person name="Tamakoshi A."/>
            <person name="Tanaka T."/>
            <person name="Terpstra P."/>
            <person name="Tognoni A."/>
            <person name="Tosato V."/>
            <person name="Uchiyama S."/>
            <person name="Vandenbol M."/>
            <person name="Vannier F."/>
            <person name="Vassarotti A."/>
            <person name="Viari A."/>
            <person name="Wambutt R."/>
            <person name="Wedler E."/>
            <person name="Wedler H."/>
            <person name="Weitzenegger T."/>
            <person name="Winters P."/>
            <person name="Wipat A."/>
            <person name="Yamamoto H."/>
            <person name="Yamane K."/>
            <person name="Yasumoto K."/>
            <person name="Yata K."/>
            <person name="Yoshida K."/>
            <person name="Yoshikawa H.-F."/>
            <person name="Zumstein E."/>
            <person name="Yoshikawa H."/>
            <person name="Danchin A."/>
        </authorList>
    </citation>
    <scope>NUCLEOTIDE SEQUENCE [LARGE SCALE GENOMIC DNA]</scope>
    <source>
        <strain>168</strain>
    </source>
</reference>
<reference key="3">
    <citation type="journal article" date="2009" name="Microbiology">
        <title>From a consortium sequence to a unified sequence: the Bacillus subtilis 168 reference genome a decade later.</title>
        <authorList>
            <person name="Barbe V."/>
            <person name="Cruveiller S."/>
            <person name="Kunst F."/>
            <person name="Lenoble P."/>
            <person name="Meurice G."/>
            <person name="Sekowska A."/>
            <person name="Vallenet D."/>
            <person name="Wang T."/>
            <person name="Moszer I."/>
            <person name="Medigue C."/>
            <person name="Danchin A."/>
        </authorList>
    </citation>
    <scope>SEQUENCE REVISION TO 203-204; 219 AND 222</scope>
</reference>
<evidence type="ECO:0000250" key="1"/>
<evidence type="ECO:0000305" key="2"/>
<protein>
    <recommendedName>
        <fullName>Phosphoribosylformylglycinamidine cyclo-ligase</fullName>
        <ecNumber>6.3.3.1</ecNumber>
    </recommendedName>
    <alternativeName>
        <fullName>AIR synthase</fullName>
    </alternativeName>
    <alternativeName>
        <fullName>AIRS</fullName>
    </alternativeName>
    <alternativeName>
        <fullName>Phosphoribosyl-aminoimidazole synthetase</fullName>
    </alternativeName>
</protein>
<organism>
    <name type="scientific">Bacillus subtilis (strain 168)</name>
    <dbReference type="NCBI Taxonomy" id="224308"/>
    <lineage>
        <taxon>Bacteria</taxon>
        <taxon>Bacillati</taxon>
        <taxon>Bacillota</taxon>
        <taxon>Bacilli</taxon>
        <taxon>Bacillales</taxon>
        <taxon>Bacillaceae</taxon>
        <taxon>Bacillus</taxon>
    </lineage>
</organism>
<sequence length="346" mass="37052">MSEAYKNAGVDIEAGYEAVKRMKKHVERTKRLGVMGSLGGFGGMFDLSELSYQKPVLISGTDGVGTKLKLAFSMDKHDTIGVDAVAMCVNDVLAQGAEPLFFLDYLAVGKADPVKIEQIVQGVAEGCEQSGSALVGGETAEMPGLYTADEYDIAGFSVGVAEKDEIVTGEKIEEGHLLIGLSSSGLHSNGFSLVRKVLLDDAELDLDTTYEPFERPLGEELLEPTRIYVKPVLAAVKSGKIDGMAHVTGGGFIENIPRMLPEGLSAEIDHGSWPIPPIFSFLQEYGKLKEEDMFNVFNMGIGFVLAVKEEHLTDVIGTLESHGEKAYLIGRVKKGEGVTFGGAALS</sequence>
<keyword id="KW-0067">ATP-binding</keyword>
<keyword id="KW-0963">Cytoplasm</keyword>
<keyword id="KW-0436">Ligase</keyword>
<keyword id="KW-0547">Nucleotide-binding</keyword>
<keyword id="KW-0658">Purine biosynthesis</keyword>
<keyword id="KW-1185">Reference proteome</keyword>
<feature type="chain" id="PRO_0000148197" description="Phosphoribosylformylglycinamidine cyclo-ligase">
    <location>
        <begin position="1"/>
        <end position="346"/>
    </location>
</feature>
<feature type="sequence conflict" description="In Ref. 1; AAA22681." evidence="2" ref="1">
    <original>EL</original>
    <variation>AW</variation>
    <location>
        <begin position="203"/>
        <end position="204"/>
    </location>
</feature>
<feature type="sequence conflict" description="In Ref. 1; AAA22681." evidence="2" ref="1">
    <original>E</original>
    <variation>Q</variation>
    <location>
        <position position="219"/>
    </location>
</feature>
<feature type="sequence conflict" description="In Ref. 1; AAA22681." evidence="2" ref="1">
    <original>L</original>
    <variation>V</variation>
    <location>
        <position position="222"/>
    </location>
</feature>
<accession>P12043</accession>
<name>PUR5_BACSU</name>
<comment type="catalytic activity">
    <reaction>
        <text>2-formamido-N(1)-(5-O-phospho-beta-D-ribosyl)acetamidine + ATP = 5-amino-1-(5-phospho-beta-D-ribosyl)imidazole + ADP + phosphate + H(+)</text>
        <dbReference type="Rhea" id="RHEA:23032"/>
        <dbReference type="ChEBI" id="CHEBI:15378"/>
        <dbReference type="ChEBI" id="CHEBI:30616"/>
        <dbReference type="ChEBI" id="CHEBI:43474"/>
        <dbReference type="ChEBI" id="CHEBI:137981"/>
        <dbReference type="ChEBI" id="CHEBI:147287"/>
        <dbReference type="ChEBI" id="CHEBI:456216"/>
        <dbReference type="EC" id="6.3.3.1"/>
    </reaction>
</comment>
<comment type="pathway">
    <text>Purine metabolism; IMP biosynthesis via de novo pathway; 5-amino-1-(5-phospho-D-ribosyl)imidazole from N(2)-formyl-N(1)-(5-phospho-D-ribosyl)glycinamide: step 2/2.</text>
</comment>
<comment type="subcellular location">
    <subcellularLocation>
        <location evidence="1">Cytoplasm</location>
    </subcellularLocation>
</comment>
<comment type="similarity">
    <text evidence="2">Belongs to the AIR synthase family.</text>
</comment>
<dbReference type="EC" id="6.3.3.1"/>
<dbReference type="EMBL" id="J02732">
    <property type="protein sequence ID" value="AAA22681.1"/>
    <property type="molecule type" value="Genomic_DNA"/>
</dbReference>
<dbReference type="EMBL" id="AL009126">
    <property type="protein sequence ID" value="CAB12470.2"/>
    <property type="molecule type" value="Genomic_DNA"/>
</dbReference>
<dbReference type="PIR" id="H29326">
    <property type="entry name" value="AJBSCL"/>
</dbReference>
<dbReference type="RefSeq" id="NP_388532.2">
    <property type="nucleotide sequence ID" value="NC_000964.3"/>
</dbReference>
<dbReference type="RefSeq" id="WP_003242485.1">
    <property type="nucleotide sequence ID" value="NZ_OZ025638.1"/>
</dbReference>
<dbReference type="SMR" id="P12043"/>
<dbReference type="FunCoup" id="P12043">
    <property type="interactions" value="579"/>
</dbReference>
<dbReference type="STRING" id="224308.BSU06500"/>
<dbReference type="PaxDb" id="224308-BSU06500"/>
<dbReference type="EnsemblBacteria" id="CAB12470">
    <property type="protein sequence ID" value="CAB12470"/>
    <property type="gene ID" value="BSU_06500"/>
</dbReference>
<dbReference type="GeneID" id="936044"/>
<dbReference type="KEGG" id="bsu:BSU06500"/>
<dbReference type="PATRIC" id="fig|224308.179.peg.706"/>
<dbReference type="eggNOG" id="COG0150">
    <property type="taxonomic scope" value="Bacteria"/>
</dbReference>
<dbReference type="InParanoid" id="P12043"/>
<dbReference type="OrthoDB" id="9802507at2"/>
<dbReference type="PhylomeDB" id="P12043"/>
<dbReference type="BioCyc" id="BSUB:BSU06500-MONOMER"/>
<dbReference type="UniPathway" id="UPA00074">
    <property type="reaction ID" value="UER00129"/>
</dbReference>
<dbReference type="Proteomes" id="UP000001570">
    <property type="component" value="Chromosome"/>
</dbReference>
<dbReference type="GO" id="GO:0005829">
    <property type="term" value="C:cytosol"/>
    <property type="evidence" value="ECO:0000318"/>
    <property type="project" value="GO_Central"/>
</dbReference>
<dbReference type="GO" id="GO:0005524">
    <property type="term" value="F:ATP binding"/>
    <property type="evidence" value="ECO:0007669"/>
    <property type="project" value="UniProtKB-KW"/>
</dbReference>
<dbReference type="GO" id="GO:0004637">
    <property type="term" value="F:phosphoribosylamine-glycine ligase activity"/>
    <property type="evidence" value="ECO:0000318"/>
    <property type="project" value="GO_Central"/>
</dbReference>
<dbReference type="GO" id="GO:0004641">
    <property type="term" value="F:phosphoribosylformylglycinamidine cyclo-ligase activity"/>
    <property type="evidence" value="ECO:0000318"/>
    <property type="project" value="GO_Central"/>
</dbReference>
<dbReference type="GO" id="GO:0006189">
    <property type="term" value="P:'de novo' IMP biosynthetic process"/>
    <property type="evidence" value="ECO:0007669"/>
    <property type="project" value="UniProtKB-UniRule"/>
</dbReference>
<dbReference type="GO" id="GO:0046084">
    <property type="term" value="P:adenine biosynthetic process"/>
    <property type="evidence" value="ECO:0000318"/>
    <property type="project" value="GO_Central"/>
</dbReference>
<dbReference type="GO" id="GO:0006164">
    <property type="term" value="P:purine nucleotide biosynthetic process"/>
    <property type="evidence" value="ECO:0000318"/>
    <property type="project" value="GO_Central"/>
</dbReference>
<dbReference type="CDD" id="cd02196">
    <property type="entry name" value="PurM"/>
    <property type="match status" value="1"/>
</dbReference>
<dbReference type="FunFam" id="3.30.1330.10:FF:000001">
    <property type="entry name" value="Phosphoribosylformylglycinamidine cyclo-ligase"/>
    <property type="match status" value="1"/>
</dbReference>
<dbReference type="FunFam" id="3.90.650.10:FF:000001">
    <property type="entry name" value="Phosphoribosylformylglycinamidine cyclo-ligase"/>
    <property type="match status" value="1"/>
</dbReference>
<dbReference type="Gene3D" id="3.90.650.10">
    <property type="entry name" value="PurM-like C-terminal domain"/>
    <property type="match status" value="1"/>
</dbReference>
<dbReference type="Gene3D" id="3.30.1330.10">
    <property type="entry name" value="PurM-like, N-terminal domain"/>
    <property type="match status" value="1"/>
</dbReference>
<dbReference type="HAMAP" id="MF_00741">
    <property type="entry name" value="AIRS"/>
    <property type="match status" value="1"/>
</dbReference>
<dbReference type="InterPro" id="IPR010918">
    <property type="entry name" value="PurM-like_C_dom"/>
</dbReference>
<dbReference type="InterPro" id="IPR036676">
    <property type="entry name" value="PurM-like_C_sf"/>
</dbReference>
<dbReference type="InterPro" id="IPR016188">
    <property type="entry name" value="PurM-like_N"/>
</dbReference>
<dbReference type="InterPro" id="IPR036921">
    <property type="entry name" value="PurM-like_N_sf"/>
</dbReference>
<dbReference type="InterPro" id="IPR004733">
    <property type="entry name" value="PurM_cligase"/>
</dbReference>
<dbReference type="NCBIfam" id="TIGR00878">
    <property type="entry name" value="purM"/>
    <property type="match status" value="1"/>
</dbReference>
<dbReference type="PANTHER" id="PTHR10520:SF12">
    <property type="entry name" value="TRIFUNCTIONAL PURINE BIOSYNTHETIC PROTEIN ADENOSINE-3"/>
    <property type="match status" value="1"/>
</dbReference>
<dbReference type="PANTHER" id="PTHR10520">
    <property type="entry name" value="TRIFUNCTIONAL PURINE BIOSYNTHETIC PROTEIN ADENOSINE-3-RELATED"/>
    <property type="match status" value="1"/>
</dbReference>
<dbReference type="Pfam" id="PF00586">
    <property type="entry name" value="AIRS"/>
    <property type="match status" value="1"/>
</dbReference>
<dbReference type="Pfam" id="PF02769">
    <property type="entry name" value="AIRS_C"/>
    <property type="match status" value="1"/>
</dbReference>
<dbReference type="SUPFAM" id="SSF56042">
    <property type="entry name" value="PurM C-terminal domain-like"/>
    <property type="match status" value="1"/>
</dbReference>
<dbReference type="SUPFAM" id="SSF55326">
    <property type="entry name" value="PurM N-terminal domain-like"/>
    <property type="match status" value="1"/>
</dbReference>
<proteinExistence type="inferred from homology"/>
<gene>
    <name type="primary">purM</name>
    <name type="synonym">ath</name>
    <name type="ordered locus">BSU06500</name>
</gene>